<sequence length="608" mass="62531">MTSTEAGALRRLAPPARRFLAHRKGVLVRLALWSLAESGQAFLVGHAVARSVDEGFLAGDPRRGLLWLGVALVAVLSGARVVRGVFAQLAGVTEPLRDGLVRHAVDRSMARAAPGGPGGTDRAAVSRLTNQVEIARDSFAGLVLTLRSFVFTAAGALLGLLSLHPALLVVVLPPLAAGLALFLVTLRPMAAAQRRALAADEALGEHAASARAALRDLTACGTGPGAERHGADLVADAAAAARTLAGWAAVRTAALGVAGHLPVLALLVAVEWLRGHGVSVGALLGAFTYLVQSLLPALHTLMTALGAAGSRLLVVLDRILGPEPEPEPEPEPEPEPELGSGLEPEPEPASEPESGPSTASASAAAFAVHTAAAPAVELRSVTLSYGVRAEPVLDALDLRVAPGEHLAVVGPSGIGKSTLTRLVAGTLAPSRGEVRVAGRVVTGRPAAELAALRVLVPQDAYVFSGTVGDNLAYLRTDPSPAELDAAVEAFGLAPLVERLGGLDATVRPAELSPGERQLVALVRAYLSPAPLLLLDEATCHLDPASEARAEKALAGRSGTLVVVAHRLSSAVRADRTLVLDGIRAQSGTHAELLGRSPLYRDLTGHWNS</sequence>
<keyword id="KW-0067">ATP-binding</keyword>
<keyword id="KW-1003">Cell membrane</keyword>
<keyword id="KW-0472">Membrane</keyword>
<keyword id="KW-0547">Nucleotide-binding</keyword>
<keyword id="KW-1185">Reference proteome</keyword>
<keyword id="KW-0812">Transmembrane</keyword>
<keyword id="KW-1133">Transmembrane helix</keyword>
<keyword id="KW-0813">Transport</keyword>
<evidence type="ECO:0000255" key="1"/>
<evidence type="ECO:0000255" key="2">
    <source>
        <dbReference type="PROSITE-ProRule" id="PRU00434"/>
    </source>
</evidence>
<evidence type="ECO:0000255" key="3">
    <source>
        <dbReference type="PROSITE-ProRule" id="PRU00441"/>
    </source>
</evidence>
<evidence type="ECO:0000256" key="4">
    <source>
        <dbReference type="SAM" id="MobiDB-lite"/>
    </source>
</evidence>
<evidence type="ECO:0000269" key="5">
    <source>
    </source>
</evidence>
<evidence type="ECO:0000269" key="6">
    <source>
    </source>
</evidence>
<evidence type="ECO:0000269" key="7">
    <source>
    </source>
</evidence>
<evidence type="ECO:0000303" key="8">
    <source>
    </source>
</evidence>
<evidence type="ECO:0000303" key="9">
    <source>
    </source>
</evidence>
<evidence type="ECO:0000305" key="10"/>
<evidence type="ECO:0000305" key="11">
    <source>
    </source>
</evidence>
<accession>Q7AKE5</accession>
<accession>Q53819</accession>
<protein>
    <recommendedName>
        <fullName evidence="8">ABC transporter ATP-binding protein RamB</fullName>
    </recommendedName>
</protein>
<gene>
    <name evidence="9" type="primary">ramB</name>
    <name type="ordered locus">SCO6684</name>
</gene>
<dbReference type="EMBL" id="U03771">
    <property type="protein sequence ID" value="AAA21389.1"/>
    <property type="molecule type" value="Genomic_DNA"/>
</dbReference>
<dbReference type="EMBL" id="AL939128">
    <property type="protein sequence ID" value="CAA19963.1"/>
    <property type="molecule type" value="Genomic_DNA"/>
</dbReference>
<dbReference type="PIR" id="T35183">
    <property type="entry name" value="T35183"/>
</dbReference>
<dbReference type="RefSeq" id="NP_630759.1">
    <property type="nucleotide sequence ID" value="NC_003888.3"/>
</dbReference>
<dbReference type="RefSeq" id="WP_011031102.1">
    <property type="nucleotide sequence ID" value="NZ_VNID01000002.1"/>
</dbReference>
<dbReference type="SMR" id="Q7AKE5"/>
<dbReference type="STRING" id="100226.gene:17764342"/>
<dbReference type="PaxDb" id="100226-SCO6684"/>
<dbReference type="KEGG" id="sco:SCO6684"/>
<dbReference type="PATRIC" id="fig|100226.15.peg.6789"/>
<dbReference type="eggNOG" id="COG1132">
    <property type="taxonomic scope" value="Bacteria"/>
</dbReference>
<dbReference type="HOGENOM" id="CLU_000604_84_3_11"/>
<dbReference type="InParanoid" id="Q7AKE5"/>
<dbReference type="OrthoDB" id="9806127at2"/>
<dbReference type="Proteomes" id="UP000001973">
    <property type="component" value="Chromosome"/>
</dbReference>
<dbReference type="GO" id="GO:0005886">
    <property type="term" value="C:plasma membrane"/>
    <property type="evidence" value="ECO:0007669"/>
    <property type="project" value="UniProtKB-SubCell"/>
</dbReference>
<dbReference type="GO" id="GO:0140359">
    <property type="term" value="F:ABC-type transporter activity"/>
    <property type="evidence" value="ECO:0007669"/>
    <property type="project" value="InterPro"/>
</dbReference>
<dbReference type="GO" id="GO:0005524">
    <property type="term" value="F:ATP binding"/>
    <property type="evidence" value="ECO:0007669"/>
    <property type="project" value="UniProtKB-KW"/>
</dbReference>
<dbReference type="GO" id="GO:0016887">
    <property type="term" value="F:ATP hydrolysis activity"/>
    <property type="evidence" value="ECO:0007669"/>
    <property type="project" value="InterPro"/>
</dbReference>
<dbReference type="GO" id="GO:0034040">
    <property type="term" value="F:ATPase-coupled lipid transmembrane transporter activity"/>
    <property type="evidence" value="ECO:0000318"/>
    <property type="project" value="GO_Central"/>
</dbReference>
<dbReference type="GO" id="GO:0055085">
    <property type="term" value="P:transmembrane transport"/>
    <property type="evidence" value="ECO:0000318"/>
    <property type="project" value="GO_Central"/>
</dbReference>
<dbReference type="FunFam" id="1.20.1560.10:FF:000321">
    <property type="entry name" value="ABC transporter ATP-binding protein"/>
    <property type="match status" value="1"/>
</dbReference>
<dbReference type="Gene3D" id="1.20.1560.10">
    <property type="entry name" value="ABC transporter type 1, transmembrane domain"/>
    <property type="match status" value="1"/>
</dbReference>
<dbReference type="Gene3D" id="3.40.50.300">
    <property type="entry name" value="P-loop containing nucleotide triphosphate hydrolases"/>
    <property type="match status" value="1"/>
</dbReference>
<dbReference type="InterPro" id="IPR003593">
    <property type="entry name" value="AAA+_ATPase"/>
</dbReference>
<dbReference type="InterPro" id="IPR011527">
    <property type="entry name" value="ABC1_TM_dom"/>
</dbReference>
<dbReference type="InterPro" id="IPR036640">
    <property type="entry name" value="ABC1_TM_sf"/>
</dbReference>
<dbReference type="InterPro" id="IPR003439">
    <property type="entry name" value="ABC_transporter-like_ATP-bd"/>
</dbReference>
<dbReference type="InterPro" id="IPR017871">
    <property type="entry name" value="ABC_transporter-like_CS"/>
</dbReference>
<dbReference type="InterPro" id="IPR027417">
    <property type="entry name" value="P-loop_NTPase"/>
</dbReference>
<dbReference type="InterPro" id="IPR039421">
    <property type="entry name" value="Type_1_exporter"/>
</dbReference>
<dbReference type="PANTHER" id="PTHR24221">
    <property type="entry name" value="ATP-BINDING CASSETTE SUB-FAMILY B"/>
    <property type="match status" value="1"/>
</dbReference>
<dbReference type="PANTHER" id="PTHR24221:SF654">
    <property type="entry name" value="ATP-BINDING CASSETTE SUB-FAMILY B MEMBER 6"/>
    <property type="match status" value="1"/>
</dbReference>
<dbReference type="Pfam" id="PF00005">
    <property type="entry name" value="ABC_tran"/>
    <property type="match status" value="1"/>
</dbReference>
<dbReference type="SMART" id="SM00382">
    <property type="entry name" value="AAA"/>
    <property type="match status" value="1"/>
</dbReference>
<dbReference type="SUPFAM" id="SSF90123">
    <property type="entry name" value="ABC transporter transmembrane region"/>
    <property type="match status" value="1"/>
</dbReference>
<dbReference type="SUPFAM" id="SSF52540">
    <property type="entry name" value="P-loop containing nucleoside triphosphate hydrolases"/>
    <property type="match status" value="1"/>
</dbReference>
<dbReference type="PROSITE" id="PS50929">
    <property type="entry name" value="ABC_TM1F"/>
    <property type="match status" value="1"/>
</dbReference>
<dbReference type="PROSITE" id="PS00211">
    <property type="entry name" value="ABC_TRANSPORTER_1"/>
    <property type="match status" value="1"/>
</dbReference>
<dbReference type="PROSITE" id="PS50893">
    <property type="entry name" value="ABC_TRANSPORTER_2"/>
    <property type="match status" value="1"/>
</dbReference>
<reference key="1">
    <citation type="journal article" date="1994" name="J. Bacteriol.">
        <title>Cloning and analysis of a gene cluster from Streptomyces coelicolor that causes accelerated aerial mycelium formation in Streptomyces lividans.</title>
        <authorList>
            <person name="Ma H."/>
            <person name="Kendall K."/>
        </authorList>
    </citation>
    <scope>NUCLEOTIDE SEQUENCE [GENOMIC DNA]</scope>
    <scope>FUNCTION</scope>
    <source>
        <strain>A3(2) / M130</strain>
    </source>
</reference>
<reference key="2">
    <citation type="journal article" date="2002" name="Nature">
        <title>Complete genome sequence of the model actinomycete Streptomyces coelicolor A3(2).</title>
        <authorList>
            <person name="Bentley S.D."/>
            <person name="Chater K.F."/>
            <person name="Cerdeno-Tarraga A.-M."/>
            <person name="Challis G.L."/>
            <person name="Thomson N.R."/>
            <person name="James K.D."/>
            <person name="Harris D.E."/>
            <person name="Quail M.A."/>
            <person name="Kieser H."/>
            <person name="Harper D."/>
            <person name="Bateman A."/>
            <person name="Brown S."/>
            <person name="Chandra G."/>
            <person name="Chen C.W."/>
            <person name="Collins M."/>
            <person name="Cronin A."/>
            <person name="Fraser A."/>
            <person name="Goble A."/>
            <person name="Hidalgo J."/>
            <person name="Hornsby T."/>
            <person name="Howarth S."/>
            <person name="Huang C.-H."/>
            <person name="Kieser T."/>
            <person name="Larke L."/>
            <person name="Murphy L.D."/>
            <person name="Oliver K."/>
            <person name="O'Neil S."/>
            <person name="Rabbinowitsch E."/>
            <person name="Rajandream M.A."/>
            <person name="Rutherford K.M."/>
            <person name="Rutter S."/>
            <person name="Seeger K."/>
            <person name="Saunders D."/>
            <person name="Sharp S."/>
            <person name="Squares R."/>
            <person name="Squares S."/>
            <person name="Taylor K."/>
            <person name="Warren T."/>
            <person name="Wietzorrek A."/>
            <person name="Woodward J.R."/>
            <person name="Barrell B.G."/>
            <person name="Parkhill J."/>
            <person name="Hopwood D.A."/>
        </authorList>
    </citation>
    <scope>NUCLEOTIDE SEQUENCE [LARGE SCALE GENOMIC DNA]</scope>
    <source>
        <strain>ATCC BAA-471 / A3(2) / M145</strain>
    </source>
</reference>
<reference key="3">
    <citation type="journal article" date="2002" name="Mol. Microbiol.">
        <title>The ramC gene is required for morphogenesis in Streptomyces coelicolor and expressed in a cell type-specific manner under the direct control of RamR.</title>
        <authorList>
            <person name="O'Connor T.J."/>
            <person name="Kanellis P."/>
            <person name="Nodwell J.R."/>
        </authorList>
    </citation>
    <scope>OPERON</scope>
    <source>
        <strain>A3(2) / J1501</strain>
        <strain>ATCC BAA-471 / A3(2) / M145</strain>
    </source>
</reference>
<reference key="4">
    <citation type="journal article" date="2004" name="Proc. Natl. Acad. Sci. U.S.A.">
        <title>The SapB morphogen is a lantibiotic-like peptide derived from the product of the developmental gene ramS in Streptomyces coelicolor.</title>
        <authorList>
            <person name="Kodani S."/>
            <person name="Hudson M.E."/>
            <person name="Durrant M.C."/>
            <person name="Buttner M.J."/>
            <person name="Nodwell J.R."/>
            <person name="Willey J.M."/>
        </authorList>
    </citation>
    <scope>FUNCTION</scope>
    <source>
        <strain>A3(2) / J1501</strain>
    </source>
</reference>
<reference key="5">
    <citation type="journal article" date="2007" name="Mol. Microbiol.">
        <title>SapB and the chaplins: connections between morphogenetic proteins in Streptomyces coelicolor.</title>
        <authorList>
            <person name="Capstick D.S."/>
            <person name="Willey J.M."/>
            <person name="Buttner M.J."/>
            <person name="Elliot M.A."/>
        </authorList>
    </citation>
    <scope>DISRUPTION PHENOTYPE</scope>
    <source>
        <strain>A3(2) / M600</strain>
    </source>
</reference>
<name>RAMB_STRCO</name>
<proteinExistence type="evidence at transcript level"/>
<organism>
    <name type="scientific">Streptomyces coelicolor (strain ATCC BAA-471 / A3(2) / M145)</name>
    <dbReference type="NCBI Taxonomy" id="100226"/>
    <lineage>
        <taxon>Bacteria</taxon>
        <taxon>Bacillati</taxon>
        <taxon>Actinomycetota</taxon>
        <taxon>Actinomycetes</taxon>
        <taxon>Kitasatosporales</taxon>
        <taxon>Streptomycetaceae</taxon>
        <taxon>Streptomyces</taxon>
        <taxon>Streptomyces albidoflavus group</taxon>
    </lineage>
</organism>
<feature type="chain" id="PRO_0000445442" description="ABC transporter ATP-binding protein RamB">
    <location>
        <begin position="1"/>
        <end position="608"/>
    </location>
</feature>
<feature type="transmembrane region" description="Helical" evidence="1 3">
    <location>
        <begin position="25"/>
        <end position="45"/>
    </location>
</feature>
<feature type="transmembrane region" description="Helical" evidence="1 3">
    <location>
        <begin position="66"/>
        <end position="86"/>
    </location>
</feature>
<feature type="transmembrane region" description="Helical" evidence="1 3">
    <location>
        <begin position="141"/>
        <end position="161"/>
    </location>
</feature>
<feature type="transmembrane region" description="Helical" evidence="1 3">
    <location>
        <begin position="166"/>
        <end position="186"/>
    </location>
</feature>
<feature type="transmembrane region" description="Helical" evidence="1 3">
    <location>
        <begin position="253"/>
        <end position="273"/>
    </location>
</feature>
<feature type="domain" description="ABC transmembrane type-1" evidence="3">
    <location>
        <begin position="30"/>
        <end position="296"/>
    </location>
</feature>
<feature type="domain" description="ABC transporter" evidence="2">
    <location>
        <begin position="376"/>
        <end position="605"/>
    </location>
</feature>
<feature type="region of interest" description="Disordered" evidence="4">
    <location>
        <begin position="321"/>
        <end position="362"/>
    </location>
</feature>
<feature type="compositionally biased region" description="Acidic residues" evidence="4">
    <location>
        <begin position="324"/>
        <end position="336"/>
    </location>
</feature>
<feature type="compositionally biased region" description="Low complexity" evidence="4">
    <location>
        <begin position="351"/>
        <end position="362"/>
    </location>
</feature>
<feature type="binding site" evidence="2">
    <location>
        <begin position="410"/>
        <end position="417"/>
    </location>
    <ligand>
        <name>ATP</name>
        <dbReference type="ChEBI" id="CHEBI:30616"/>
    </ligand>
</feature>
<comment type="function">
    <text evidence="7 11">Probably involved in exporting SapB from the cell (Probable). Expression of the ram locus (ramA, ramB and ramR) induces rapid aerial mycelium formation in S.lividans (PubMed:8206859).</text>
</comment>
<comment type="subcellular location">
    <subcellularLocation>
        <location evidence="1">Cell membrane</location>
        <topology evidence="1">Multi-pass membrane protein</topology>
    </subcellularLocation>
</comment>
<comment type="induction">
    <text evidence="5">Probably part of the ramC-ramS-ramA-ramB operon.</text>
</comment>
<comment type="disruption phenotype">
    <text evidence="6">Deletion of the ramC-ramS-ramA-ramB operon on rich medium leads to an initially bald (no aerial hyphae) phenotype; after 4 days develops a substantial aerial mycelium. Wild-type mycelium on minimal medium. No expression of SapB, normal expression of chaplins. A complete chaplin-negative plus ram-negative strain (deletion of ramR or the ramC-ramS-ramA-ramB operon) leads to the complete loss of robust aerial hyphae.</text>
</comment>
<comment type="similarity">
    <text evidence="10">Belongs to the ABC transporter superfamily.</text>
</comment>